<comment type="function">
    <text evidence="1">NADP-dependent 17-alpha-hydroxysteroid dehydrogenase that converts 5-alpha-androstane-3,17-dione into androsterone. Has lower 3-alpha-hydroxysteroid dehydrogenase activity. Has broad substrate specificity and acts on various 17-alpha-hydroxysteroids, 17-ketosteroids, 3-alpha hydroxysteroids and 3-ketosteroids. Reduction of keto groups is strictly stereoselective. Reduction of 17-ketosteroids yields only 17-alpha-hydroxysteroids. Likewise, reduction of 3-ketosteroids yields only 3-alpha-hydroxysteroids (By similarity).</text>
</comment>
<comment type="catalytic activity">
    <reaction>
        <text>androsterone + NADP(+) = 5alpha-androstan-3,17-dione + NADPH + H(+)</text>
        <dbReference type="Rhea" id="RHEA:20377"/>
        <dbReference type="ChEBI" id="CHEBI:15378"/>
        <dbReference type="ChEBI" id="CHEBI:15994"/>
        <dbReference type="ChEBI" id="CHEBI:16032"/>
        <dbReference type="ChEBI" id="CHEBI:57783"/>
        <dbReference type="ChEBI" id="CHEBI:58349"/>
        <dbReference type="EC" id="1.1.1.209"/>
    </reaction>
</comment>
<comment type="catalytic activity">
    <reaction>
        <text>androsterone + NAD(+) = 5alpha-androstan-3,17-dione + NADH + H(+)</text>
        <dbReference type="Rhea" id="RHEA:20381"/>
        <dbReference type="ChEBI" id="CHEBI:15378"/>
        <dbReference type="ChEBI" id="CHEBI:15994"/>
        <dbReference type="ChEBI" id="CHEBI:16032"/>
        <dbReference type="ChEBI" id="CHEBI:57540"/>
        <dbReference type="ChEBI" id="CHEBI:57945"/>
        <dbReference type="EC" id="1.1.1.209"/>
    </reaction>
</comment>
<comment type="subunit">
    <text evidence="1">Monomer.</text>
</comment>
<comment type="subcellular location">
    <subcellularLocation>
        <location evidence="1">Cytoplasm</location>
    </subcellularLocation>
</comment>
<comment type="similarity">
    <text evidence="2">Belongs to the aldo/keto reductase family.</text>
</comment>
<gene>
    <name type="primary">Akr1c21</name>
</gene>
<keyword id="KW-0963">Cytoplasm</keyword>
<keyword id="KW-0443">Lipid metabolism</keyword>
<keyword id="KW-0521">NADP</keyword>
<keyword id="KW-0560">Oxidoreductase</keyword>
<keyword id="KW-1185">Reference proteome</keyword>
<keyword id="KW-0753">Steroid metabolism</keyword>
<proteinExistence type="evidence at transcript level"/>
<protein>
    <recommendedName>
        <fullName>Aldo-keto reductase family 1 member C21</fullName>
        <ecNumber>1.1.1.-</ecNumber>
    </recommendedName>
    <alternativeName>
        <fullName>17-alpha-hydroxysteroid dehydrogenase</fullName>
        <shortName>17-alpha-HSD</shortName>
    </alternativeName>
    <alternativeName>
        <fullName>3(or 17)-alpha-hydroxysteroid dehydrogenase</fullName>
        <ecNumber>1.1.1.209</ecNumber>
    </alternativeName>
    <alternativeName>
        <fullName>3-alpha-hydroxysteroid dehydrogenase</fullName>
    </alternativeName>
</protein>
<dbReference type="EC" id="1.1.1.-"/>
<dbReference type="EC" id="1.1.1.209"/>
<dbReference type="EMBL" id="BC078957">
    <property type="protein sequence ID" value="AAH78957.1"/>
    <property type="molecule type" value="mRNA"/>
</dbReference>
<dbReference type="RefSeq" id="NP_001013075.1">
    <property type="nucleotide sequence ID" value="NM_001013057.1"/>
</dbReference>
<dbReference type="SMR" id="Q6AYQ2"/>
<dbReference type="FunCoup" id="Q6AYQ2">
    <property type="interactions" value="20"/>
</dbReference>
<dbReference type="STRING" id="10116.ENSRNOP00000063166"/>
<dbReference type="iPTMnet" id="Q6AYQ2"/>
<dbReference type="PhosphoSitePlus" id="Q6AYQ2"/>
<dbReference type="PaxDb" id="10116-ENSRNOP00000045355"/>
<dbReference type="GeneID" id="291283"/>
<dbReference type="KEGG" id="rno:291283"/>
<dbReference type="UCSC" id="RGD:1311841">
    <property type="organism name" value="rat"/>
</dbReference>
<dbReference type="AGR" id="RGD:1311841"/>
<dbReference type="CTD" id="1646"/>
<dbReference type="RGD" id="1311841">
    <property type="gene designation" value="Akr1c21"/>
</dbReference>
<dbReference type="VEuPathDB" id="HostDB:ENSRNOG00000029844"/>
<dbReference type="eggNOG" id="KOG1577">
    <property type="taxonomic scope" value="Eukaryota"/>
</dbReference>
<dbReference type="HOGENOM" id="CLU_023205_0_0_1"/>
<dbReference type="InParanoid" id="Q6AYQ2"/>
<dbReference type="OrthoDB" id="416253at2759"/>
<dbReference type="PhylomeDB" id="Q6AYQ2"/>
<dbReference type="TreeFam" id="TF106492"/>
<dbReference type="Reactome" id="R-RNO-193368">
    <property type="pathway name" value="Synthesis of bile acids and bile salts via 7alpha-hydroxycholesterol"/>
</dbReference>
<dbReference type="Reactome" id="R-RNO-193775">
    <property type="pathway name" value="Synthesis of bile acids and bile salts via 24-hydroxycholesterol"/>
</dbReference>
<dbReference type="Reactome" id="R-RNO-193807">
    <property type="pathway name" value="Synthesis of bile acids and bile salts via 27-hydroxycholesterol"/>
</dbReference>
<dbReference type="Reactome" id="R-RNO-2162123">
    <property type="pathway name" value="Synthesis of Prostaglandins (PG) and Thromboxanes (TX)"/>
</dbReference>
<dbReference type="Reactome" id="R-RNO-5365859">
    <property type="pathway name" value="RA biosynthesis pathway"/>
</dbReference>
<dbReference type="Reactome" id="R-RNO-975634">
    <property type="pathway name" value="Retinoid metabolism and transport"/>
</dbReference>
<dbReference type="Reactome" id="R-RNO-9757110">
    <property type="pathway name" value="Prednisone ADME"/>
</dbReference>
<dbReference type="PRO" id="PR:Q6AYQ2"/>
<dbReference type="Proteomes" id="UP000002494">
    <property type="component" value="Chromosome 17"/>
</dbReference>
<dbReference type="Bgee" id="ENSRNOG00000029844">
    <property type="expression patterns" value="Expressed in liver and 4 other cell types or tissues"/>
</dbReference>
<dbReference type="ExpressionAtlas" id="Q6AYQ2">
    <property type="expression patterns" value="baseline and differential"/>
</dbReference>
<dbReference type="GO" id="GO:0005829">
    <property type="term" value="C:cytosol"/>
    <property type="evidence" value="ECO:0000318"/>
    <property type="project" value="GO_Central"/>
</dbReference>
<dbReference type="GO" id="GO:0072582">
    <property type="term" value="F:17-beta-hydroxysteroid dehydrogenase (NADP+) activity"/>
    <property type="evidence" value="ECO:0000266"/>
    <property type="project" value="RGD"/>
</dbReference>
<dbReference type="GO" id="GO:0047024">
    <property type="term" value="F:5-alpha-androstane-3-beta,17-beta-diol dehydrogenase (NADP+) activity"/>
    <property type="evidence" value="ECO:0000266"/>
    <property type="project" value="RGD"/>
</dbReference>
<dbReference type="GO" id="GO:0004032">
    <property type="term" value="F:aldose reductase (NADPH) activity"/>
    <property type="evidence" value="ECO:0000266"/>
    <property type="project" value="RGD"/>
</dbReference>
<dbReference type="GO" id="GO:0047023">
    <property type="term" value="F:androsterone dehydrogenase [NAD(P)+] activity"/>
    <property type="evidence" value="ECO:0000266"/>
    <property type="project" value="RGD"/>
</dbReference>
<dbReference type="GO" id="GO:0032052">
    <property type="term" value="F:bile acid binding"/>
    <property type="evidence" value="ECO:0000266"/>
    <property type="project" value="RGD"/>
</dbReference>
<dbReference type="GO" id="GO:0031406">
    <property type="term" value="F:carboxylic acid binding"/>
    <property type="evidence" value="ECO:0000266"/>
    <property type="project" value="RGD"/>
</dbReference>
<dbReference type="GO" id="GO:0047086">
    <property type="term" value="F:ketosteroid monooxygenase activity"/>
    <property type="evidence" value="ECO:0000266"/>
    <property type="project" value="RGD"/>
</dbReference>
<dbReference type="GO" id="GO:1902121">
    <property type="term" value="F:lithocholic acid binding"/>
    <property type="evidence" value="ECO:0000266"/>
    <property type="project" value="RGD"/>
</dbReference>
<dbReference type="GO" id="GO:0070401">
    <property type="term" value="F:NADP+ binding"/>
    <property type="evidence" value="ECO:0000266"/>
    <property type="project" value="RGD"/>
</dbReference>
<dbReference type="GO" id="GO:0070402">
    <property type="term" value="F:NADPH binding"/>
    <property type="evidence" value="ECO:0000266"/>
    <property type="project" value="RGD"/>
</dbReference>
<dbReference type="GO" id="GO:0016655">
    <property type="term" value="F:oxidoreductase activity, acting on NAD(P)H, quinone or similar compound as acceptor"/>
    <property type="evidence" value="ECO:0000266"/>
    <property type="project" value="RGD"/>
</dbReference>
<dbReference type="GO" id="GO:0005496">
    <property type="term" value="F:steroid binding"/>
    <property type="evidence" value="ECO:0000266"/>
    <property type="project" value="RGD"/>
</dbReference>
<dbReference type="GO" id="GO:0033764">
    <property type="term" value="F:steroid dehydrogenase activity, acting on the CH-OH group of donors, NAD or NADP as acceptor"/>
    <property type="evidence" value="ECO:0000266"/>
    <property type="project" value="RGD"/>
</dbReference>
<dbReference type="GO" id="GO:0047115">
    <property type="term" value="F:trans-1,2-dihydrobenzene-1,2-diol dehydrogenase activity"/>
    <property type="evidence" value="ECO:0000266"/>
    <property type="project" value="RGD"/>
</dbReference>
<dbReference type="GO" id="GO:0071395">
    <property type="term" value="P:cellular response to jasmonic acid stimulus"/>
    <property type="evidence" value="ECO:0000266"/>
    <property type="project" value="RGD"/>
</dbReference>
<dbReference type="GO" id="GO:0071799">
    <property type="term" value="P:cellular response to prostaglandin D stimulus"/>
    <property type="evidence" value="ECO:0000266"/>
    <property type="project" value="RGD"/>
</dbReference>
<dbReference type="GO" id="GO:0044597">
    <property type="term" value="P:daunorubicin metabolic process"/>
    <property type="evidence" value="ECO:0000266"/>
    <property type="project" value="RGD"/>
</dbReference>
<dbReference type="GO" id="GO:0007586">
    <property type="term" value="P:digestion"/>
    <property type="evidence" value="ECO:0000266"/>
    <property type="project" value="RGD"/>
</dbReference>
<dbReference type="GO" id="GO:0044598">
    <property type="term" value="P:doxorubicin metabolic process"/>
    <property type="evidence" value="ECO:0000266"/>
    <property type="project" value="RGD"/>
</dbReference>
<dbReference type="GO" id="GO:0030855">
    <property type="term" value="P:epithelial cell differentiation"/>
    <property type="evidence" value="ECO:0000266"/>
    <property type="project" value="RGD"/>
</dbReference>
<dbReference type="GO" id="GO:0007186">
    <property type="term" value="P:G protein-coupled receptor signaling pathway"/>
    <property type="evidence" value="ECO:0000266"/>
    <property type="project" value="RGD"/>
</dbReference>
<dbReference type="GO" id="GO:0008284">
    <property type="term" value="P:positive regulation of cell population proliferation"/>
    <property type="evidence" value="ECO:0000266"/>
    <property type="project" value="RGD"/>
</dbReference>
<dbReference type="GO" id="GO:0051897">
    <property type="term" value="P:positive regulation of phosphatidylinositol 3-kinase/protein kinase B signal transduction"/>
    <property type="evidence" value="ECO:0000266"/>
    <property type="project" value="RGD"/>
</dbReference>
<dbReference type="GO" id="GO:0042448">
    <property type="term" value="P:progesterone metabolic process"/>
    <property type="evidence" value="ECO:0000266"/>
    <property type="project" value="RGD"/>
</dbReference>
<dbReference type="GO" id="GO:0006693">
    <property type="term" value="P:prostaglandin metabolic process"/>
    <property type="evidence" value="ECO:0000266"/>
    <property type="project" value="RGD"/>
</dbReference>
<dbReference type="GO" id="GO:0008202">
    <property type="term" value="P:steroid metabolic process"/>
    <property type="evidence" value="ECO:0000266"/>
    <property type="project" value="RGD"/>
</dbReference>
<dbReference type="CDD" id="cd19108">
    <property type="entry name" value="AKR_AKR1C1-35"/>
    <property type="match status" value="1"/>
</dbReference>
<dbReference type="FunFam" id="3.20.20.100:FF:000003">
    <property type="entry name" value="Aldo-keto reductase family 1 member C3"/>
    <property type="match status" value="1"/>
</dbReference>
<dbReference type="Gene3D" id="3.20.20.100">
    <property type="entry name" value="NADP-dependent oxidoreductase domain"/>
    <property type="match status" value="1"/>
</dbReference>
<dbReference type="InterPro" id="IPR020471">
    <property type="entry name" value="AKR"/>
</dbReference>
<dbReference type="InterPro" id="IPR044482">
    <property type="entry name" value="AKR1C"/>
</dbReference>
<dbReference type="InterPro" id="IPR018170">
    <property type="entry name" value="Aldo/ket_reductase_CS"/>
</dbReference>
<dbReference type="InterPro" id="IPR023210">
    <property type="entry name" value="NADP_OxRdtase_dom"/>
</dbReference>
<dbReference type="InterPro" id="IPR036812">
    <property type="entry name" value="NADP_OxRdtase_dom_sf"/>
</dbReference>
<dbReference type="PANTHER" id="PTHR11732">
    <property type="entry name" value="ALDO/KETO REDUCTASE"/>
    <property type="match status" value="1"/>
</dbReference>
<dbReference type="Pfam" id="PF00248">
    <property type="entry name" value="Aldo_ket_red"/>
    <property type="match status" value="1"/>
</dbReference>
<dbReference type="PIRSF" id="PIRSF000097">
    <property type="entry name" value="AKR"/>
    <property type="match status" value="1"/>
</dbReference>
<dbReference type="PRINTS" id="PR00069">
    <property type="entry name" value="ALDKETRDTASE"/>
</dbReference>
<dbReference type="SUPFAM" id="SSF51430">
    <property type="entry name" value="NAD(P)-linked oxidoreductase"/>
    <property type="match status" value="1"/>
</dbReference>
<dbReference type="PROSITE" id="PS00062">
    <property type="entry name" value="ALDOKETO_REDUCTASE_2"/>
    <property type="match status" value="1"/>
</dbReference>
<sequence length="318" mass="36135">MNSKCHCVKLNDGHFIPVLGFGTAMPSELPKSKAKEVTKIAIDAGFHHFDSAFVYNTEDHVGEAIREKIANGTTRREDIFYTSKLWCTSLHPELVRSSLECSLKKLQLDYVDLYLIHFPMALKPGDENFPVDEHGKLLFDTVDLCATWEAMEKCKDAGLAKSIGVSNFNRRQLEKILNKPGLKYKPVCNQVECHLYLNQMKLLDFCKTNGIILVAYGVLGTQRYNGWVDQNSPVLLNEPVLSSMAKKYNQTPALIALRHQLQRGIVVLNTSLKEERIKENMKLSPEDMKVLDDLNRNLRYIAGGIFEGHPNFPFLDEY</sequence>
<evidence type="ECO:0000250" key="1"/>
<evidence type="ECO:0000305" key="2"/>
<organism>
    <name type="scientific">Rattus norvegicus</name>
    <name type="common">Rat</name>
    <dbReference type="NCBI Taxonomy" id="10116"/>
    <lineage>
        <taxon>Eukaryota</taxon>
        <taxon>Metazoa</taxon>
        <taxon>Chordata</taxon>
        <taxon>Craniata</taxon>
        <taxon>Vertebrata</taxon>
        <taxon>Euteleostomi</taxon>
        <taxon>Mammalia</taxon>
        <taxon>Eutheria</taxon>
        <taxon>Euarchontoglires</taxon>
        <taxon>Glires</taxon>
        <taxon>Rodentia</taxon>
        <taxon>Myomorpha</taxon>
        <taxon>Muroidea</taxon>
        <taxon>Muridae</taxon>
        <taxon>Murinae</taxon>
        <taxon>Rattus</taxon>
    </lineage>
</organism>
<reference key="1">
    <citation type="journal article" date="2004" name="Genome Res.">
        <title>The status, quality, and expansion of the NIH full-length cDNA project: the Mammalian Gene Collection (MGC).</title>
        <authorList>
            <consortium name="The MGC Project Team"/>
        </authorList>
    </citation>
    <scope>NUCLEOTIDE SEQUENCE [LARGE SCALE MRNA]</scope>
    <source>
        <tissue>Kidney</tissue>
    </source>
</reference>
<accession>Q6AYQ2</accession>
<name>AK1CL_RAT</name>
<feature type="chain" id="PRO_0000326223" description="Aldo-keto reductase family 1 member C21">
    <location>
        <begin position="1"/>
        <end position="318"/>
    </location>
</feature>
<feature type="active site" description="Proton donor" evidence="1">
    <location>
        <position position="55"/>
    </location>
</feature>
<feature type="binding site" evidence="1">
    <location>
        <begin position="20"/>
        <end position="24"/>
    </location>
    <ligand>
        <name>NADP(+)</name>
        <dbReference type="ChEBI" id="CHEBI:58349"/>
    </ligand>
</feature>
<feature type="binding site" evidence="1">
    <location>
        <position position="31"/>
    </location>
    <ligand>
        <name>substrate</name>
    </ligand>
</feature>
<feature type="binding site" evidence="1">
    <location>
        <position position="50"/>
    </location>
    <ligand>
        <name>NADP(+)</name>
        <dbReference type="ChEBI" id="CHEBI:58349"/>
    </ligand>
</feature>
<feature type="binding site" evidence="1">
    <location>
        <position position="117"/>
    </location>
    <ligand>
        <name>substrate</name>
    </ligand>
</feature>
<feature type="binding site" evidence="1">
    <location>
        <begin position="166"/>
        <end position="167"/>
    </location>
    <ligand>
        <name>NADP(+)</name>
        <dbReference type="ChEBI" id="CHEBI:58349"/>
    </ligand>
</feature>
<feature type="binding site" evidence="1">
    <location>
        <position position="190"/>
    </location>
    <ligand>
        <name>NADP(+)</name>
        <dbReference type="ChEBI" id="CHEBI:58349"/>
    </ligand>
</feature>
<feature type="binding site" evidence="1">
    <location>
        <begin position="216"/>
        <end position="224"/>
    </location>
    <ligand>
        <name>NADP(+)</name>
        <dbReference type="ChEBI" id="CHEBI:58349"/>
    </ligand>
</feature>
<feature type="binding site" evidence="1">
    <location>
        <begin position="270"/>
        <end position="280"/>
    </location>
    <ligand>
        <name>NADP(+)</name>
        <dbReference type="ChEBI" id="CHEBI:58349"/>
    </ligand>
</feature>
<feature type="site" description="Lowers pKa of active site Tyr" evidence="1">
    <location>
        <position position="84"/>
    </location>
</feature>